<gene>
    <name evidence="1" type="primary">dcd</name>
</gene>
<protein>
    <recommendedName>
        <fullName evidence="1">dCTP deaminase, dUMP-forming</fullName>
        <ecNumber evidence="1">3.5.4.30</ecNumber>
    </recommendedName>
    <alternativeName>
        <fullName evidence="1">Bifunctional dCTP deaminase:dUTPase</fullName>
    </alternativeName>
    <alternativeName>
        <fullName evidence="1">DCD-DUT</fullName>
    </alternativeName>
</protein>
<organism>
    <name type="scientific">Hathewaya histolytica</name>
    <name type="common">Clostridium histolyticum</name>
    <dbReference type="NCBI Taxonomy" id="1498"/>
    <lineage>
        <taxon>Bacteria</taxon>
        <taxon>Bacillati</taxon>
        <taxon>Bacillota</taxon>
        <taxon>Clostridia</taxon>
        <taxon>Eubacteriales</taxon>
        <taxon>Clostridiaceae</taxon>
        <taxon>Hathewaya</taxon>
    </lineage>
</organism>
<feature type="chain" id="PRO_0000155980" description="dCTP deaminase, dUMP-forming">
    <location>
        <begin position="1"/>
        <end position="172"/>
    </location>
</feature>
<feature type="active site" description="Proton donor/acceptor" evidence="1">
    <location>
        <position position="121"/>
    </location>
</feature>
<feature type="binding site" evidence="1">
    <location>
        <begin position="93"/>
        <end position="98"/>
    </location>
    <ligand>
        <name>dCTP</name>
        <dbReference type="ChEBI" id="CHEBI:61481"/>
    </ligand>
</feature>
<feature type="binding site" evidence="1">
    <location>
        <position position="111"/>
    </location>
    <ligand>
        <name>dCTP</name>
        <dbReference type="ChEBI" id="CHEBI:61481"/>
    </ligand>
</feature>
<feature type="binding site" evidence="1">
    <location>
        <begin position="119"/>
        <end position="121"/>
    </location>
    <ligand>
        <name>dCTP</name>
        <dbReference type="ChEBI" id="CHEBI:61481"/>
    </ligand>
</feature>
<feature type="binding site" evidence="1">
    <location>
        <position position="138"/>
    </location>
    <ligand>
        <name>dCTP</name>
        <dbReference type="ChEBI" id="CHEBI:61481"/>
    </ligand>
</feature>
<feature type="binding site" evidence="1">
    <location>
        <position position="151"/>
    </location>
    <ligand>
        <name>dCTP</name>
        <dbReference type="ChEBI" id="CHEBI:61481"/>
    </ligand>
</feature>
<feature type="site" description="Important for bifunctional activity" evidence="1">
    <location>
        <begin position="108"/>
        <end position="109"/>
    </location>
</feature>
<sequence>MILSGKEIKNRLNKDIFIEPFSDNQLNPNSYNLRLHNELLVYENNVLDMKKENKAKKITIPEEGLLLEPGKLYLGRTIEHTRTEKLVPMLEGRSSVGRLGLFIHITAGFGDIGFSGFWTLEIFCVQPIRIYPNIEICQIYYHNIEGEYEKYTSGKYQNNTGVQPSLLFKDFE</sequence>
<keyword id="KW-0378">Hydrolase</keyword>
<keyword id="KW-0546">Nucleotide metabolism</keyword>
<keyword id="KW-0547">Nucleotide-binding</keyword>
<proteinExistence type="inferred from homology"/>
<name>DCDB_HATHI</name>
<comment type="function">
    <text evidence="1">Bifunctional enzyme that catalyzes both the deamination of dCTP to dUTP and the hydrolysis of dUTP to dUMP without releasing the toxic dUTP intermediate.</text>
</comment>
<comment type="catalytic activity">
    <reaction evidence="1">
        <text>dCTP + 2 H2O = dUMP + NH4(+) + diphosphate</text>
        <dbReference type="Rhea" id="RHEA:19205"/>
        <dbReference type="ChEBI" id="CHEBI:15377"/>
        <dbReference type="ChEBI" id="CHEBI:28938"/>
        <dbReference type="ChEBI" id="CHEBI:33019"/>
        <dbReference type="ChEBI" id="CHEBI:61481"/>
        <dbReference type="ChEBI" id="CHEBI:246422"/>
        <dbReference type="EC" id="3.5.4.30"/>
    </reaction>
</comment>
<comment type="pathway">
    <text evidence="1">Pyrimidine metabolism; dUMP biosynthesis; dUMP from dCTP: step 1/1.</text>
</comment>
<comment type="subunit">
    <text evidence="1">Homotrimer.</text>
</comment>
<comment type="similarity">
    <text evidence="1">Belongs to the dCTP deaminase family.</text>
</comment>
<reference key="1">
    <citation type="journal article" date="1999" name="J. Bacteriol.">
        <title>Gene duplication and multiplicity of collagenases in Clostridium histolyticum.</title>
        <authorList>
            <person name="Matsushita O."/>
            <person name="Jung C.-M."/>
            <person name="Katayama S."/>
            <person name="Minami J."/>
            <person name="Takahashi Y."/>
            <person name="Okabe A."/>
        </authorList>
    </citation>
    <scope>NUCLEOTIDE SEQUENCE [GENOMIC DNA]</scope>
    <source>
        <strain>ATCC 19401 / DSM 2158 / JCM 1403 / NCIMB 503 / NCTC 503</strain>
    </source>
</reference>
<accession>Q9ZNJ8</accession>
<evidence type="ECO:0000255" key="1">
    <source>
        <dbReference type="HAMAP-Rule" id="MF_00146"/>
    </source>
</evidence>
<dbReference type="EC" id="3.5.4.30" evidence="1"/>
<dbReference type="EMBL" id="AB014075">
    <property type="protein sequence ID" value="BAA34543.1"/>
    <property type="molecule type" value="Genomic_DNA"/>
</dbReference>
<dbReference type="PIR" id="T44356">
    <property type="entry name" value="T44356"/>
</dbReference>
<dbReference type="RefSeq" id="WP_138210551.1">
    <property type="nucleotide sequence ID" value="NZ_CBCRUQ010000003.1"/>
</dbReference>
<dbReference type="SMR" id="Q9ZNJ8"/>
<dbReference type="OrthoDB" id="9780202at2"/>
<dbReference type="UniPathway" id="UPA00610">
    <property type="reaction ID" value="UER00667"/>
</dbReference>
<dbReference type="GO" id="GO:0033973">
    <property type="term" value="F:dCTP deaminase (dUMP-forming) activity"/>
    <property type="evidence" value="ECO:0007669"/>
    <property type="project" value="UniProtKB-UniRule"/>
</dbReference>
<dbReference type="GO" id="GO:0008829">
    <property type="term" value="F:dCTP deaminase activity"/>
    <property type="evidence" value="ECO:0007669"/>
    <property type="project" value="InterPro"/>
</dbReference>
<dbReference type="GO" id="GO:0000166">
    <property type="term" value="F:nucleotide binding"/>
    <property type="evidence" value="ECO:0007669"/>
    <property type="project" value="UniProtKB-KW"/>
</dbReference>
<dbReference type="GO" id="GO:0006226">
    <property type="term" value="P:dUMP biosynthetic process"/>
    <property type="evidence" value="ECO:0007669"/>
    <property type="project" value="UniProtKB-UniRule"/>
</dbReference>
<dbReference type="GO" id="GO:0006229">
    <property type="term" value="P:dUTP biosynthetic process"/>
    <property type="evidence" value="ECO:0007669"/>
    <property type="project" value="InterPro"/>
</dbReference>
<dbReference type="GO" id="GO:0015949">
    <property type="term" value="P:nucleobase-containing small molecule interconversion"/>
    <property type="evidence" value="ECO:0007669"/>
    <property type="project" value="TreeGrafter"/>
</dbReference>
<dbReference type="CDD" id="cd07557">
    <property type="entry name" value="trimeric_dUTPase"/>
    <property type="match status" value="1"/>
</dbReference>
<dbReference type="Gene3D" id="2.70.40.10">
    <property type="match status" value="1"/>
</dbReference>
<dbReference type="HAMAP" id="MF_00146">
    <property type="entry name" value="dCTP_deaminase"/>
    <property type="match status" value="1"/>
</dbReference>
<dbReference type="InterPro" id="IPR011962">
    <property type="entry name" value="dCTP_deaminase"/>
</dbReference>
<dbReference type="InterPro" id="IPR036157">
    <property type="entry name" value="dUTPase-like_sf"/>
</dbReference>
<dbReference type="InterPro" id="IPR033704">
    <property type="entry name" value="dUTPase_trimeric"/>
</dbReference>
<dbReference type="NCBIfam" id="TIGR02274">
    <property type="entry name" value="dCTP_deam"/>
    <property type="match status" value="1"/>
</dbReference>
<dbReference type="PANTHER" id="PTHR42680">
    <property type="entry name" value="DCTP DEAMINASE"/>
    <property type="match status" value="1"/>
</dbReference>
<dbReference type="PANTHER" id="PTHR42680:SF3">
    <property type="entry name" value="DCTP DEAMINASE"/>
    <property type="match status" value="1"/>
</dbReference>
<dbReference type="Pfam" id="PF22769">
    <property type="entry name" value="DCD"/>
    <property type="match status" value="1"/>
</dbReference>
<dbReference type="SUPFAM" id="SSF51283">
    <property type="entry name" value="dUTPase-like"/>
    <property type="match status" value="1"/>
</dbReference>